<comment type="function">
    <text evidence="1">D-aminoacyl-tRNA deacylase with broad substrate specificity. By recycling D-aminoacyl-tRNA to D-amino acids and free tRNA molecules, this enzyme counteracts the toxicity associated with the formation of D-aminoacyl-tRNA entities in vivo.</text>
</comment>
<comment type="catalytic activity">
    <reaction evidence="1">
        <text>a D-aminoacyl-tRNA + H2O = a tRNA + a D-alpha-amino acid + H(+)</text>
        <dbReference type="Rhea" id="RHEA:13953"/>
        <dbReference type="Rhea" id="RHEA-COMP:10123"/>
        <dbReference type="Rhea" id="RHEA-COMP:10124"/>
        <dbReference type="ChEBI" id="CHEBI:15377"/>
        <dbReference type="ChEBI" id="CHEBI:15378"/>
        <dbReference type="ChEBI" id="CHEBI:59871"/>
        <dbReference type="ChEBI" id="CHEBI:78442"/>
        <dbReference type="ChEBI" id="CHEBI:79333"/>
        <dbReference type="EC" id="3.1.1.96"/>
    </reaction>
</comment>
<comment type="catalytic activity">
    <reaction evidence="1">
        <text>glycyl-tRNA(Ala) + H2O = tRNA(Ala) + glycine + H(+)</text>
        <dbReference type="Rhea" id="RHEA:53744"/>
        <dbReference type="Rhea" id="RHEA-COMP:9657"/>
        <dbReference type="Rhea" id="RHEA-COMP:13640"/>
        <dbReference type="ChEBI" id="CHEBI:15377"/>
        <dbReference type="ChEBI" id="CHEBI:15378"/>
        <dbReference type="ChEBI" id="CHEBI:57305"/>
        <dbReference type="ChEBI" id="CHEBI:78442"/>
        <dbReference type="ChEBI" id="CHEBI:78522"/>
        <dbReference type="EC" id="3.1.1.96"/>
    </reaction>
</comment>
<comment type="cofactor">
    <cofactor evidence="1">
        <name>Zn(2+)</name>
        <dbReference type="ChEBI" id="CHEBI:29105"/>
    </cofactor>
    <text evidence="1">Binds 2 Zn(2+) ions per subunit.</text>
</comment>
<comment type="subunit">
    <text evidence="1">Monomer.</text>
</comment>
<comment type="similarity">
    <text evidence="1">Belongs to the DtdA deacylase family.</text>
</comment>
<name>DTDA_METBF</name>
<keyword id="KW-0378">Hydrolase</keyword>
<keyword id="KW-0479">Metal-binding</keyword>
<keyword id="KW-0862">Zinc</keyword>
<proteinExistence type="inferred from homology"/>
<gene>
    <name evidence="1" type="primary">dtdA</name>
    <name type="ordered locus">Mbar_A2181</name>
</gene>
<organism>
    <name type="scientific">Methanosarcina barkeri (strain Fusaro / DSM 804)</name>
    <dbReference type="NCBI Taxonomy" id="269797"/>
    <lineage>
        <taxon>Archaea</taxon>
        <taxon>Methanobacteriati</taxon>
        <taxon>Methanobacteriota</taxon>
        <taxon>Stenosarchaea group</taxon>
        <taxon>Methanomicrobia</taxon>
        <taxon>Methanosarcinales</taxon>
        <taxon>Methanosarcinaceae</taxon>
        <taxon>Methanosarcina</taxon>
    </lineage>
</organism>
<sequence length="306" mass="33926">MKENSNPENPESQEKNLSETPIPKITIICSAPDLASQNIKTQLLNLIEWKLLEIPENSEFSAARESQDGKFRLVDIEETHVFQDGLDRKLENAGLPASLIIFASKHRSKEEISSLTVHCTGNPSDDVRLGGCPKSLAVSSPAAMKSILVEMKRLAEQKGLKYDVTLEVTHHGPTELSVPSLYAEIGSTEVQWKDPEAGEVAAKAILAVSLVKVPVAVGFGGGHYAMRQTKLLFETGISFGHNFPKYKLEFVDEALIRQAIEKSKADFAYFDRKSMKSEERKKISKILENLGLSVLKESEIREKYGN</sequence>
<dbReference type="EC" id="3.1.1.96" evidence="1"/>
<dbReference type="EMBL" id="CP000099">
    <property type="protein sequence ID" value="AAZ71109.1"/>
    <property type="molecule type" value="Genomic_DNA"/>
</dbReference>
<dbReference type="SMR" id="Q46AI3"/>
<dbReference type="STRING" id="269797.Mbar_A2181"/>
<dbReference type="PaxDb" id="269797-Mbar_A2181"/>
<dbReference type="KEGG" id="mba:Mbar_A2181"/>
<dbReference type="eggNOG" id="arCOG01616">
    <property type="taxonomic scope" value="Archaea"/>
</dbReference>
<dbReference type="HOGENOM" id="CLU_056464_1_0_2"/>
<dbReference type="OrthoDB" id="9863at2157"/>
<dbReference type="GO" id="GO:0051499">
    <property type="term" value="F:D-aminoacyl-tRNA deacylase activity"/>
    <property type="evidence" value="ECO:0007669"/>
    <property type="project" value="UniProtKB-UniRule"/>
</dbReference>
<dbReference type="GO" id="GO:0008270">
    <property type="term" value="F:zinc ion binding"/>
    <property type="evidence" value="ECO:0007669"/>
    <property type="project" value="UniProtKB-UniRule"/>
</dbReference>
<dbReference type="GO" id="GO:0019478">
    <property type="term" value="P:D-amino acid catabolic process"/>
    <property type="evidence" value="ECO:0007669"/>
    <property type="project" value="UniProtKB-UniRule"/>
</dbReference>
<dbReference type="FunFam" id="3.40.50.10700:FF:000002">
    <property type="entry name" value="D-aminoacyl-tRNA deacylase"/>
    <property type="match status" value="1"/>
</dbReference>
<dbReference type="Gene3D" id="3.40.50.10700">
    <property type="entry name" value="AF0625-like"/>
    <property type="match status" value="1"/>
</dbReference>
<dbReference type="Gene3D" id="3.40.630.50">
    <property type="entry name" value="AF0625-like"/>
    <property type="match status" value="1"/>
</dbReference>
<dbReference type="HAMAP" id="MF_00562">
    <property type="entry name" value="Deacylase_DtdA"/>
    <property type="match status" value="1"/>
</dbReference>
<dbReference type="InterPro" id="IPR018033">
    <property type="entry name" value="Deacylase_DtdA_archaea"/>
</dbReference>
<dbReference type="InterPro" id="IPR007508">
    <property type="entry name" value="DtdA"/>
</dbReference>
<dbReference type="NCBIfam" id="NF003073">
    <property type="entry name" value="PRK03995.1-5"/>
    <property type="match status" value="1"/>
</dbReference>
<dbReference type="PANTHER" id="PTHR34667">
    <property type="entry name" value="D-AMINOACYL-TRNA DEACYLASE"/>
    <property type="match status" value="1"/>
</dbReference>
<dbReference type="PANTHER" id="PTHR34667:SF1">
    <property type="entry name" value="D-AMINOACYL-TRNA DEACYLASE"/>
    <property type="match status" value="1"/>
</dbReference>
<dbReference type="Pfam" id="PF04414">
    <property type="entry name" value="tRNA_deacylase"/>
    <property type="match status" value="1"/>
</dbReference>
<dbReference type="PIRSF" id="PIRSF016210">
    <property type="entry name" value="UCP016210"/>
    <property type="match status" value="1"/>
</dbReference>
<dbReference type="SUPFAM" id="SSF142535">
    <property type="entry name" value="AF0625-like"/>
    <property type="match status" value="1"/>
</dbReference>
<evidence type="ECO:0000255" key="1">
    <source>
        <dbReference type="HAMAP-Rule" id="MF_00562"/>
    </source>
</evidence>
<accession>Q46AI3</accession>
<protein>
    <recommendedName>
        <fullName evidence="1">D-aminoacyl-tRNA deacylase</fullName>
        <ecNumber evidence="1">3.1.1.96</ecNumber>
    </recommendedName>
    <alternativeName>
        <fullName>D-tyrosyl-tRNA(Tyr) deacylase</fullName>
    </alternativeName>
</protein>
<feature type="chain" id="PRO_0000345223" description="D-aminoacyl-tRNA deacylase">
    <location>
        <begin position="1"/>
        <end position="306"/>
    </location>
</feature>
<reference key="1">
    <citation type="journal article" date="2006" name="J. Bacteriol.">
        <title>The Methanosarcina barkeri genome: comparative analysis with Methanosarcina acetivorans and Methanosarcina mazei reveals extensive rearrangement within methanosarcinal genomes.</title>
        <authorList>
            <person name="Maeder D.L."/>
            <person name="Anderson I."/>
            <person name="Brettin T.S."/>
            <person name="Bruce D.C."/>
            <person name="Gilna P."/>
            <person name="Han C.S."/>
            <person name="Lapidus A."/>
            <person name="Metcalf W.W."/>
            <person name="Saunders E."/>
            <person name="Tapia R."/>
            <person name="Sowers K.R."/>
        </authorList>
    </citation>
    <scope>NUCLEOTIDE SEQUENCE [LARGE SCALE GENOMIC DNA]</scope>
    <source>
        <strain>Fusaro / DSM 804</strain>
    </source>
</reference>